<name>TEFF1_RAT</name>
<sequence>MGAQAPLRLPAAPPLAVCGYTSVLLLFAFCLPGSGASNQPAGGGGDCPGGRGKSINCSELNLRESDIRACDESSCKYGGVCKEDGDGLKCACQFQCHTNYIPVCGSNGDTYQNECFLRRAACKHQKDITVVARGPCYSDNGSGSGEGEEEGSGAGAHRKHSKCGPCKYKAECDEDAENVGCVCNIDCSGYSFNPVCASDGSSYNNPCFVREASCIRQEQIDIRHLGHCTDTDDTSLLGKKDDGLQYRPDVKDAGDQREDVYIGSHMPCPENLNGYCIHGKCEFIYSTQKASCRCESGYTGQHCEKTDFSILYVVPSRQKLTHVLIAAIIGAVQIAIIVAIVMCITRKCPKNNRGRRQKQNLGHFTSETSSRMV</sequence>
<keyword id="KW-1003">Cell membrane</keyword>
<keyword id="KW-0217">Developmental protein</keyword>
<keyword id="KW-1015">Disulfide bond</keyword>
<keyword id="KW-0245">EGF-like domain</keyword>
<keyword id="KW-0325">Glycoprotein</keyword>
<keyword id="KW-0472">Membrane</keyword>
<keyword id="KW-1185">Reference proteome</keyword>
<keyword id="KW-0677">Repeat</keyword>
<keyword id="KW-0732">Signal</keyword>
<keyword id="KW-0812">Transmembrane</keyword>
<keyword id="KW-1133">Transmembrane helix</keyword>
<evidence type="ECO:0000250" key="1">
    <source>
        <dbReference type="UniProtKB" id="Q8IYR6"/>
    </source>
</evidence>
<evidence type="ECO:0000255" key="2"/>
<evidence type="ECO:0000255" key="3">
    <source>
        <dbReference type="PROSITE-ProRule" id="PRU00076"/>
    </source>
</evidence>
<evidence type="ECO:0000255" key="4">
    <source>
        <dbReference type="PROSITE-ProRule" id="PRU00798"/>
    </source>
</evidence>
<evidence type="ECO:0000256" key="5">
    <source>
        <dbReference type="SAM" id="MobiDB-lite"/>
    </source>
</evidence>
<evidence type="ECO:0000305" key="6"/>
<proteinExistence type="evidence at transcript level"/>
<feature type="signal peptide" evidence="2">
    <location>
        <begin position="1"/>
        <end position="36"/>
    </location>
</feature>
<feature type="chain" id="PRO_0000286058" description="Tomoregulin-1" evidence="2">
    <location>
        <begin position="37"/>
        <end position="373"/>
    </location>
</feature>
<feature type="topological domain" description="Extracellular" evidence="6">
    <location>
        <begin position="37"/>
        <end position="323"/>
    </location>
</feature>
<feature type="transmembrane region" description="Helical" evidence="2">
    <location>
        <begin position="324"/>
        <end position="344"/>
    </location>
</feature>
<feature type="topological domain" description="Cytoplasmic" evidence="6">
    <location>
        <begin position="345"/>
        <end position="373"/>
    </location>
</feature>
<feature type="domain" description="Kazal-like 1" evidence="4">
    <location>
        <begin position="91"/>
        <end position="138"/>
    </location>
</feature>
<feature type="domain" description="Kazal-like 2" evidence="4">
    <location>
        <begin position="182"/>
        <end position="230"/>
    </location>
</feature>
<feature type="domain" description="EGF-like" evidence="3">
    <location>
        <begin position="264"/>
        <end position="304"/>
    </location>
</feature>
<feature type="region of interest" description="Disordered" evidence="5">
    <location>
        <begin position="140"/>
        <end position="162"/>
    </location>
</feature>
<feature type="region of interest" description="Disordered" evidence="5">
    <location>
        <begin position="352"/>
        <end position="373"/>
    </location>
</feature>
<feature type="compositionally biased region" description="Polar residues" evidence="5">
    <location>
        <begin position="359"/>
        <end position="373"/>
    </location>
</feature>
<feature type="site" description="Reactive bond" evidence="4">
    <location>
        <begin position="98"/>
        <end position="99"/>
    </location>
</feature>
<feature type="site" description="Reactive bond" evidence="4">
    <location>
        <begin position="189"/>
        <end position="190"/>
    </location>
</feature>
<feature type="glycosylation site" description="N-linked (GlcNAc...) asparagine" evidence="2">
    <location>
        <position position="56"/>
    </location>
</feature>
<feature type="glycosylation site" description="N-linked (GlcNAc...) asparagine" evidence="2">
    <location>
        <position position="140"/>
    </location>
</feature>
<feature type="disulfide bond" evidence="4">
    <location>
        <begin position="92"/>
        <end position="122"/>
    </location>
</feature>
<feature type="disulfide bond" evidence="4">
    <location>
        <begin position="96"/>
        <end position="115"/>
    </location>
</feature>
<feature type="disulfide bond" evidence="4">
    <location>
        <begin position="104"/>
        <end position="136"/>
    </location>
</feature>
<feature type="disulfide bond" evidence="4">
    <location>
        <begin position="183"/>
        <end position="214"/>
    </location>
</feature>
<feature type="disulfide bond" evidence="4">
    <location>
        <begin position="187"/>
        <end position="207"/>
    </location>
</feature>
<feature type="disulfide bond" evidence="4">
    <location>
        <begin position="196"/>
        <end position="228"/>
    </location>
</feature>
<feature type="disulfide bond" evidence="3">
    <location>
        <begin position="268"/>
        <end position="281"/>
    </location>
</feature>
<feature type="disulfide bond" evidence="3">
    <location>
        <begin position="276"/>
        <end position="292"/>
    </location>
</feature>
<feature type="disulfide bond" evidence="3">
    <location>
        <begin position="294"/>
        <end position="303"/>
    </location>
</feature>
<protein>
    <recommendedName>
        <fullName>Tomoregulin-1</fullName>
        <shortName>TR-1</shortName>
    </recommendedName>
    <alternativeName>
        <fullName>Protein NC1</fullName>
    </alternativeName>
    <alternativeName>
        <fullName>Transmembrane protein with EGF-like and one follistatin-like domain</fullName>
    </alternativeName>
</protein>
<organism>
    <name type="scientific">Rattus norvegicus</name>
    <name type="common">Rat</name>
    <dbReference type="NCBI Taxonomy" id="10116"/>
    <lineage>
        <taxon>Eukaryota</taxon>
        <taxon>Metazoa</taxon>
        <taxon>Chordata</taxon>
        <taxon>Craniata</taxon>
        <taxon>Vertebrata</taxon>
        <taxon>Euteleostomi</taxon>
        <taxon>Mammalia</taxon>
        <taxon>Eutheria</taxon>
        <taxon>Euarchontoglires</taxon>
        <taxon>Glires</taxon>
        <taxon>Rodentia</taxon>
        <taxon>Myomorpha</taxon>
        <taxon>Muroidea</taxon>
        <taxon>Muridae</taxon>
        <taxon>Murinae</taxon>
        <taxon>Rattus</taxon>
    </lineage>
</organism>
<comment type="function">
    <text evidence="1">Neuron-specific restriction factor that prevents herpes simplex virus 1 (HHV-1) infection in the brain by blocking viral entry. Also able to restrict herpes simplex virus 2 (HHV-2) infection, although to a lesser extent. Acts by preventing the association between the viral glycoprotein D (gD) and its cell surface receptor NECTIN1, thereby inhibiting fusion of the virus and the cell membrane. Also able to prevent the association between the viral glycoprotein B (gB) and MYH9/NMMHC-IIA and MYH10/NMMHC-IIB receptors.</text>
</comment>
<comment type="subunit">
    <text evidence="1">May interact with ST14.</text>
</comment>
<comment type="subcellular location">
    <subcellularLocation>
        <location evidence="1">Cell membrane</location>
        <topology evidence="2">Single-pass type I membrane protein</topology>
    </subcellularLocation>
</comment>
<comment type="similarity">
    <text evidence="6">Belongs to the tomoregulin family.</text>
</comment>
<accession>Q9QYV1</accession>
<reference key="1">
    <citation type="submission" date="1999-11" db="EMBL/GenBank/DDBJ databases">
        <title>Reverse transcription of a highly G+C rich mRNA 5'end by Tth polymerase resolved inversions and deletions which were generated by MMLV reverse transcriptase.</title>
        <authorList>
            <person name="Kugler S."/>
            <person name="Baehr M."/>
        </authorList>
    </citation>
    <scope>NUCLEOTIDE SEQUENCE [MRNA]</scope>
    <source>
        <tissue>Brain</tissue>
    </source>
</reference>
<reference key="2">
    <citation type="journal article" date="2004" name="Genome Res.">
        <title>The status, quality, and expansion of the NIH full-length cDNA project: the Mammalian Gene Collection (MGC).</title>
        <authorList>
            <consortium name="The MGC Project Team"/>
        </authorList>
    </citation>
    <scope>NUCLEOTIDE SEQUENCE [LARGE SCALE MRNA]</scope>
    <source>
        <tissue>Brain</tissue>
    </source>
</reference>
<gene>
    <name type="primary">Tmeff1</name>
    <name type="synonym">Nc1</name>
</gene>
<dbReference type="EMBL" id="AJ250730">
    <property type="protein sequence ID" value="CAB60131.1"/>
    <property type="molecule type" value="mRNA"/>
</dbReference>
<dbReference type="EMBL" id="BC129093">
    <property type="protein sequence ID" value="AAI29094.1"/>
    <property type="molecule type" value="mRNA"/>
</dbReference>
<dbReference type="RefSeq" id="NP_075409.1">
    <property type="nucleotide sequence ID" value="NM_023020.3"/>
</dbReference>
<dbReference type="SMR" id="Q9QYV1"/>
<dbReference type="BioGRID" id="248901">
    <property type="interactions" value="1"/>
</dbReference>
<dbReference type="FunCoup" id="Q9QYV1">
    <property type="interactions" value="2531"/>
</dbReference>
<dbReference type="STRING" id="10116.ENSRNOP00000063443"/>
<dbReference type="MEROPS" id="I01.974"/>
<dbReference type="MEROPS" id="I01.978"/>
<dbReference type="PhosphoSitePlus" id="Q9QYV1"/>
<dbReference type="SwissPalm" id="Q9QYV1"/>
<dbReference type="PaxDb" id="10116-ENSRNOP00000063443"/>
<dbReference type="Ensembl" id="ENSRNOT00000065775.3">
    <property type="protein sequence ID" value="ENSRNOP00000063443.2"/>
    <property type="gene ID" value="ENSRNOG00000008034.6"/>
</dbReference>
<dbReference type="GeneID" id="63845"/>
<dbReference type="KEGG" id="rno:63845"/>
<dbReference type="UCSC" id="RGD:62005">
    <property type="organism name" value="rat"/>
</dbReference>
<dbReference type="AGR" id="RGD:62005"/>
<dbReference type="CTD" id="8577"/>
<dbReference type="RGD" id="62005">
    <property type="gene designation" value="Tmeff1"/>
</dbReference>
<dbReference type="eggNOG" id="KOG3649">
    <property type="taxonomic scope" value="Eukaryota"/>
</dbReference>
<dbReference type="GeneTree" id="ENSGT00940000160714"/>
<dbReference type="HOGENOM" id="CLU_048579_1_0_1"/>
<dbReference type="InParanoid" id="Q9QYV1"/>
<dbReference type="OMA" id="ARGSCYS"/>
<dbReference type="OrthoDB" id="328123at2759"/>
<dbReference type="PhylomeDB" id="Q9QYV1"/>
<dbReference type="PRO" id="PR:Q9QYV1"/>
<dbReference type="Proteomes" id="UP000002494">
    <property type="component" value="Chromosome 5"/>
</dbReference>
<dbReference type="Bgee" id="ENSRNOG00000008034">
    <property type="expression patterns" value="Expressed in Ammon's horn and 15 other cell types or tissues"/>
</dbReference>
<dbReference type="GO" id="GO:0005886">
    <property type="term" value="C:plasma membrane"/>
    <property type="evidence" value="ECO:0000250"/>
    <property type="project" value="UniProtKB"/>
</dbReference>
<dbReference type="GO" id="GO:0141069">
    <property type="term" value="F:receptor ligand inhibitor activity"/>
    <property type="evidence" value="ECO:0000250"/>
    <property type="project" value="UniProtKB"/>
</dbReference>
<dbReference type="GO" id="GO:0046597">
    <property type="term" value="P:host-mediated suppression of symbiont invasion"/>
    <property type="evidence" value="ECO:0000250"/>
    <property type="project" value="UniProtKB"/>
</dbReference>
<dbReference type="CDD" id="cd00104">
    <property type="entry name" value="KAZAL_FS"/>
    <property type="match status" value="2"/>
</dbReference>
<dbReference type="FunFam" id="3.30.60.30:FF:000051">
    <property type="entry name" value="LOW QUALITY PROTEIN: tomoregulin-1"/>
    <property type="match status" value="1"/>
</dbReference>
<dbReference type="FunFam" id="2.10.25.10:FF:000233">
    <property type="entry name" value="tomoregulin-1 isoform X1"/>
    <property type="match status" value="1"/>
</dbReference>
<dbReference type="FunFam" id="3.30.60.30:FF:000002">
    <property type="entry name" value="tomoregulin-2 isoform X1"/>
    <property type="match status" value="1"/>
</dbReference>
<dbReference type="Gene3D" id="3.30.60.30">
    <property type="match status" value="2"/>
</dbReference>
<dbReference type="Gene3D" id="2.10.25.10">
    <property type="entry name" value="Laminin"/>
    <property type="match status" value="1"/>
</dbReference>
<dbReference type="InterPro" id="IPR000742">
    <property type="entry name" value="EGF-like_dom"/>
</dbReference>
<dbReference type="InterPro" id="IPR002350">
    <property type="entry name" value="Kazal_dom"/>
</dbReference>
<dbReference type="InterPro" id="IPR036058">
    <property type="entry name" value="Kazal_dom_sf"/>
</dbReference>
<dbReference type="PANTHER" id="PTHR21632">
    <property type="entry name" value="REGULATORY PROTEIN ZESTE"/>
    <property type="match status" value="1"/>
</dbReference>
<dbReference type="PANTHER" id="PTHR21632:SF3">
    <property type="entry name" value="TOMOREGULIN-1"/>
    <property type="match status" value="1"/>
</dbReference>
<dbReference type="Pfam" id="PF07648">
    <property type="entry name" value="Kazal_2"/>
    <property type="match status" value="2"/>
</dbReference>
<dbReference type="SMART" id="SM00280">
    <property type="entry name" value="KAZAL"/>
    <property type="match status" value="2"/>
</dbReference>
<dbReference type="SUPFAM" id="SSF57196">
    <property type="entry name" value="EGF/Laminin"/>
    <property type="match status" value="1"/>
</dbReference>
<dbReference type="SUPFAM" id="SSF100895">
    <property type="entry name" value="Kazal-type serine protease inhibitors"/>
    <property type="match status" value="2"/>
</dbReference>
<dbReference type="PROSITE" id="PS00022">
    <property type="entry name" value="EGF_1"/>
    <property type="match status" value="1"/>
</dbReference>
<dbReference type="PROSITE" id="PS01186">
    <property type="entry name" value="EGF_2"/>
    <property type="match status" value="1"/>
</dbReference>
<dbReference type="PROSITE" id="PS50026">
    <property type="entry name" value="EGF_3"/>
    <property type="match status" value="2"/>
</dbReference>
<dbReference type="PROSITE" id="PS51465">
    <property type="entry name" value="KAZAL_2"/>
    <property type="match status" value="2"/>
</dbReference>